<dbReference type="EMBL" id="CP000910">
    <property type="protein sequence ID" value="ABY23890.1"/>
    <property type="molecule type" value="Genomic_DNA"/>
</dbReference>
<dbReference type="RefSeq" id="WP_012245556.1">
    <property type="nucleotide sequence ID" value="NC_010168.1"/>
</dbReference>
<dbReference type="SMR" id="A9WSV2"/>
<dbReference type="STRING" id="288705.RSal33209_2158"/>
<dbReference type="KEGG" id="rsa:RSal33209_2158"/>
<dbReference type="eggNOG" id="COG0197">
    <property type="taxonomic scope" value="Bacteria"/>
</dbReference>
<dbReference type="HOGENOM" id="CLU_078858_2_1_11"/>
<dbReference type="Proteomes" id="UP000002007">
    <property type="component" value="Chromosome"/>
</dbReference>
<dbReference type="GO" id="GO:0022625">
    <property type="term" value="C:cytosolic large ribosomal subunit"/>
    <property type="evidence" value="ECO:0007669"/>
    <property type="project" value="TreeGrafter"/>
</dbReference>
<dbReference type="GO" id="GO:0019843">
    <property type="term" value="F:rRNA binding"/>
    <property type="evidence" value="ECO:0007669"/>
    <property type="project" value="UniProtKB-UniRule"/>
</dbReference>
<dbReference type="GO" id="GO:0003735">
    <property type="term" value="F:structural constituent of ribosome"/>
    <property type="evidence" value="ECO:0007669"/>
    <property type="project" value="InterPro"/>
</dbReference>
<dbReference type="GO" id="GO:0000049">
    <property type="term" value="F:tRNA binding"/>
    <property type="evidence" value="ECO:0007669"/>
    <property type="project" value="UniProtKB-KW"/>
</dbReference>
<dbReference type="GO" id="GO:0006412">
    <property type="term" value="P:translation"/>
    <property type="evidence" value="ECO:0007669"/>
    <property type="project" value="UniProtKB-UniRule"/>
</dbReference>
<dbReference type="CDD" id="cd01433">
    <property type="entry name" value="Ribosomal_L16_L10e"/>
    <property type="match status" value="1"/>
</dbReference>
<dbReference type="FunFam" id="3.90.1170.10:FF:000001">
    <property type="entry name" value="50S ribosomal protein L16"/>
    <property type="match status" value="1"/>
</dbReference>
<dbReference type="Gene3D" id="3.90.1170.10">
    <property type="entry name" value="Ribosomal protein L10e/L16"/>
    <property type="match status" value="1"/>
</dbReference>
<dbReference type="HAMAP" id="MF_01342">
    <property type="entry name" value="Ribosomal_uL16"/>
    <property type="match status" value="1"/>
</dbReference>
<dbReference type="InterPro" id="IPR047873">
    <property type="entry name" value="Ribosomal_uL16"/>
</dbReference>
<dbReference type="InterPro" id="IPR000114">
    <property type="entry name" value="Ribosomal_uL16_bact-type"/>
</dbReference>
<dbReference type="InterPro" id="IPR020798">
    <property type="entry name" value="Ribosomal_uL16_CS"/>
</dbReference>
<dbReference type="InterPro" id="IPR016180">
    <property type="entry name" value="Ribosomal_uL16_dom"/>
</dbReference>
<dbReference type="InterPro" id="IPR036920">
    <property type="entry name" value="Ribosomal_uL16_sf"/>
</dbReference>
<dbReference type="NCBIfam" id="TIGR01164">
    <property type="entry name" value="rplP_bact"/>
    <property type="match status" value="1"/>
</dbReference>
<dbReference type="PANTHER" id="PTHR12220">
    <property type="entry name" value="50S/60S RIBOSOMAL PROTEIN L16"/>
    <property type="match status" value="1"/>
</dbReference>
<dbReference type="PANTHER" id="PTHR12220:SF13">
    <property type="entry name" value="LARGE RIBOSOMAL SUBUNIT PROTEIN UL16M"/>
    <property type="match status" value="1"/>
</dbReference>
<dbReference type="Pfam" id="PF00252">
    <property type="entry name" value="Ribosomal_L16"/>
    <property type="match status" value="1"/>
</dbReference>
<dbReference type="PRINTS" id="PR00060">
    <property type="entry name" value="RIBOSOMALL16"/>
</dbReference>
<dbReference type="SUPFAM" id="SSF54686">
    <property type="entry name" value="Ribosomal protein L16p/L10e"/>
    <property type="match status" value="1"/>
</dbReference>
<dbReference type="PROSITE" id="PS00586">
    <property type="entry name" value="RIBOSOMAL_L16_1"/>
    <property type="match status" value="1"/>
</dbReference>
<dbReference type="PROSITE" id="PS00701">
    <property type="entry name" value="RIBOSOMAL_L16_2"/>
    <property type="match status" value="1"/>
</dbReference>
<organism>
    <name type="scientific">Renibacterium salmoninarum (strain ATCC 33209 / DSM 20767 / JCM 11484 / NBRC 15589 / NCIMB 2235)</name>
    <dbReference type="NCBI Taxonomy" id="288705"/>
    <lineage>
        <taxon>Bacteria</taxon>
        <taxon>Bacillati</taxon>
        <taxon>Actinomycetota</taxon>
        <taxon>Actinomycetes</taxon>
        <taxon>Micrococcales</taxon>
        <taxon>Micrococcaceae</taxon>
        <taxon>Renibacterium</taxon>
    </lineage>
</organism>
<reference key="1">
    <citation type="journal article" date="2008" name="J. Bacteriol.">
        <title>Genome sequence of the fish pathogen Renibacterium salmoninarum suggests reductive evolution away from an environmental Arthrobacter ancestor.</title>
        <authorList>
            <person name="Wiens G.D."/>
            <person name="Rockey D.D."/>
            <person name="Wu Z."/>
            <person name="Chang J."/>
            <person name="Levy R."/>
            <person name="Crane S."/>
            <person name="Chen D.S."/>
            <person name="Capri G.R."/>
            <person name="Burnett J.R."/>
            <person name="Sudheesh P.S."/>
            <person name="Schipma M.J."/>
            <person name="Burd H."/>
            <person name="Bhattacharyya A."/>
            <person name="Rhodes L.D."/>
            <person name="Kaul R."/>
            <person name="Strom M.S."/>
        </authorList>
    </citation>
    <scope>NUCLEOTIDE SEQUENCE [LARGE SCALE GENOMIC DNA]</scope>
    <source>
        <strain>ATCC 33209 / DSM 20767 / JCM 11484 / NBRC 15589 / NCIMB 2235</strain>
    </source>
</reference>
<name>RL16_RENSM</name>
<accession>A9WSV2</accession>
<evidence type="ECO:0000255" key="1">
    <source>
        <dbReference type="HAMAP-Rule" id="MF_01342"/>
    </source>
</evidence>
<evidence type="ECO:0000256" key="2">
    <source>
        <dbReference type="SAM" id="MobiDB-lite"/>
    </source>
</evidence>
<evidence type="ECO:0000305" key="3"/>
<protein>
    <recommendedName>
        <fullName evidence="1">Large ribosomal subunit protein uL16</fullName>
    </recommendedName>
    <alternativeName>
        <fullName evidence="3">50S ribosomal protein L16</fullName>
    </alternativeName>
</protein>
<proteinExistence type="inferred from homology"/>
<sequence>MLIPRRVKHRKQHHPGRSGQATGGTKVSFGEYGIQALTPAYVTNRQIESARIAMTRHIKRGGKVWINIYPDRPLTKKPAETRMGSGKGSPEWWIANVKPGRVLFELSGVNEEVAREALRLAIHKLPLKARIVRREGGE</sequence>
<feature type="chain" id="PRO_1000086771" description="Large ribosomal subunit protein uL16">
    <location>
        <begin position="1"/>
        <end position="138"/>
    </location>
</feature>
<feature type="region of interest" description="Disordered" evidence="2">
    <location>
        <begin position="1"/>
        <end position="25"/>
    </location>
</feature>
<feature type="compositionally biased region" description="Basic residues" evidence="2">
    <location>
        <begin position="1"/>
        <end position="16"/>
    </location>
</feature>
<gene>
    <name evidence="1" type="primary">rplP</name>
    <name type="ordered locus">RSal33209_2158</name>
</gene>
<comment type="function">
    <text evidence="1">Binds 23S rRNA and is also seen to make contacts with the A and possibly P site tRNAs.</text>
</comment>
<comment type="subunit">
    <text evidence="1">Part of the 50S ribosomal subunit.</text>
</comment>
<comment type="similarity">
    <text evidence="1">Belongs to the universal ribosomal protein uL16 family.</text>
</comment>
<keyword id="KW-1185">Reference proteome</keyword>
<keyword id="KW-0687">Ribonucleoprotein</keyword>
<keyword id="KW-0689">Ribosomal protein</keyword>
<keyword id="KW-0694">RNA-binding</keyword>
<keyword id="KW-0699">rRNA-binding</keyword>
<keyword id="KW-0820">tRNA-binding</keyword>